<proteinExistence type="evidence at protein level"/>
<evidence type="ECO:0000250" key="1">
    <source>
        <dbReference type="UniProtKB" id="O54728"/>
    </source>
</evidence>
<evidence type="ECO:0000250" key="2">
    <source>
        <dbReference type="UniProtKB" id="Q05017"/>
    </source>
</evidence>
<evidence type="ECO:0000255" key="3"/>
<evidence type="ECO:0000255" key="4">
    <source>
        <dbReference type="PROSITE-ProRule" id="PRU00498"/>
    </source>
</evidence>
<evidence type="ECO:0000269" key="5">
    <source>
    </source>
</evidence>
<evidence type="ECO:0000303" key="6">
    <source>
    </source>
</evidence>
<evidence type="ECO:0000303" key="7">
    <source>
    </source>
</evidence>
<evidence type="ECO:0000305" key="8"/>
<gene>
    <name type="primary">PLB1</name>
    <name type="synonym">PLB</name>
</gene>
<feature type="signal peptide" evidence="3">
    <location>
        <begin position="1"/>
        <end position="21"/>
    </location>
</feature>
<feature type="chain" id="PRO_0000324383" description="Phospholipase B1, membrane-associated">
    <location>
        <begin position="22"/>
        <end position="1458"/>
    </location>
</feature>
<feature type="topological domain" description="Extracellular" evidence="3">
    <location>
        <begin position="22"/>
        <end position="1417"/>
    </location>
</feature>
<feature type="transmembrane region" description="Helical" evidence="3">
    <location>
        <begin position="1418"/>
        <end position="1438"/>
    </location>
</feature>
<feature type="topological domain" description="Cytoplasmic" evidence="3">
    <location>
        <begin position="1439"/>
        <end position="1458"/>
    </location>
</feature>
<feature type="repeat" description="1" evidence="3">
    <location>
        <begin position="39"/>
        <end position="347"/>
    </location>
</feature>
<feature type="repeat" description="2" evidence="3">
    <location>
        <begin position="362"/>
        <end position="707"/>
    </location>
</feature>
<feature type="repeat" description="3" evidence="3">
    <location>
        <begin position="708"/>
        <end position="1054"/>
    </location>
</feature>
<feature type="repeat" description="4" evidence="3">
    <location>
        <begin position="1064"/>
        <end position="1402"/>
    </location>
</feature>
<feature type="region of interest" description="4 X 308-326 AA approximate repeats" evidence="3">
    <location>
        <begin position="39"/>
        <end position="1402"/>
    </location>
</feature>
<feature type="region of interest" description="Necessary for membrane localization" evidence="1">
    <location>
        <begin position="1403"/>
        <end position="1445"/>
    </location>
</feature>
<feature type="active site" evidence="1">
    <location>
        <position position="400"/>
    </location>
</feature>
<feature type="active site" evidence="1">
    <location>
        <position position="514"/>
    </location>
</feature>
<feature type="active site" evidence="1">
    <location>
        <position position="655"/>
    </location>
</feature>
<feature type="glycosylation site" description="N-linked (GlcNAc...) asparagine" evidence="4">
    <location>
        <position position="173"/>
    </location>
</feature>
<feature type="glycosylation site" description="N-linked (GlcNAc...) asparagine" evidence="4">
    <location>
        <position position="240"/>
    </location>
</feature>
<feature type="glycosylation site" description="N-linked (GlcNAc...) asparagine" evidence="4">
    <location>
        <position position="493"/>
    </location>
</feature>
<feature type="glycosylation site" description="N-linked (GlcNAc...) asparagine" evidence="4">
    <location>
        <position position="529"/>
    </location>
</feature>
<feature type="glycosylation site" description="N-linked (GlcNAc...) asparagine" evidence="4">
    <location>
        <position position="590"/>
    </location>
</feature>
<feature type="glycosylation site" description="N-linked (GlcNAc...) asparagine" evidence="4">
    <location>
        <position position="690"/>
    </location>
</feature>
<feature type="glycosylation site" description="N-linked (GlcNAc...) asparagine" evidence="4">
    <location>
        <position position="783"/>
    </location>
</feature>
<feature type="glycosylation site" description="N-linked (GlcNAc...) asparagine" evidence="4">
    <location>
        <position position="797"/>
    </location>
</feature>
<feature type="glycosylation site" description="N-linked (GlcNAc...) asparagine" evidence="4">
    <location>
        <position position="809"/>
    </location>
</feature>
<feature type="glycosylation site" description="N-linked (GlcNAc...) asparagine" evidence="4">
    <location>
        <position position="1055"/>
    </location>
</feature>
<feature type="glycosylation site" description="N-linked (GlcNAc...) asparagine" evidence="4">
    <location>
        <position position="1113"/>
    </location>
</feature>
<feature type="glycosylation site" description="N-linked (GlcNAc...) asparagine" evidence="4">
    <location>
        <position position="1275"/>
    </location>
</feature>
<feature type="glycosylation site" description="N-linked (GlcNAc...) asparagine" evidence="4">
    <location>
        <position position="1378"/>
    </location>
</feature>
<feature type="splice variant" id="VSP_032225" description="In isoform 5." evidence="7">
    <location>
        <begin position="1"/>
        <end position="1035"/>
    </location>
</feature>
<feature type="splice variant" id="VSP_032226" description="In isoform 2." evidence="7">
    <location>
        <begin position="1"/>
        <end position="312"/>
    </location>
</feature>
<feature type="splice variant" id="VSP_032227" description="In isoform 3." evidence="7">
    <original>Q</original>
    <variation>QQAPSLSTVLLS</variation>
    <location>
        <position position="184"/>
    </location>
</feature>
<feature type="splice variant" id="VSP_032228" description="In isoform 3." evidence="7">
    <location>
        <begin position="523"/>
        <end position="544"/>
    </location>
</feature>
<feature type="splice variant" id="VSP_032229" description="In isoform 4." evidence="6">
    <original>AGNGIGSKPDD</original>
    <variation>VRTLGPQVVWG</variation>
    <location>
        <begin position="750"/>
        <end position="760"/>
    </location>
</feature>
<feature type="splice variant" id="VSP_032230" description="In isoform 4." evidence="6">
    <location>
        <begin position="761"/>
        <end position="1458"/>
    </location>
</feature>
<feature type="splice variant" id="VSP_032231" description="In isoform 2." evidence="7">
    <original>SAGGDGSLENVTTLPNILREFNRNLTG</original>
    <variation>RESKPGFLSDSWVSKSNRKCTRKAPNP</variation>
    <location>
        <begin position="774"/>
        <end position="800"/>
    </location>
</feature>
<feature type="splice variant" id="VSP_032232" description="In isoform 2." evidence="7">
    <location>
        <begin position="801"/>
        <end position="1458"/>
    </location>
</feature>
<feature type="sequence variant" id="VAR_039793" description="In dbSNP:rs6753929.">
    <original>V</original>
    <variation>L</variation>
    <location>
        <position position="212"/>
    </location>
</feature>
<feature type="sequence variant" id="VAR_039794" description="In dbSNP:rs11681826.">
    <original>M</original>
    <variation>V</variation>
    <location>
        <position position="708"/>
    </location>
</feature>
<feature type="sequence variant" id="VAR_039795" description="In dbSNP:rs10201128.">
    <original>G</original>
    <variation>R</variation>
    <location>
        <position position="821"/>
    </location>
</feature>
<feature type="sequence variant" id="VAR_039796" description="In dbSNP:rs7601771.">
    <original>H</original>
    <variation>D</variation>
    <location>
        <position position="879"/>
    </location>
</feature>
<feature type="sequence variant" id="VAR_061358" description="In dbSNP:rs34289907.">
    <original>A</original>
    <variation>V</variation>
    <location>
        <position position="987"/>
    </location>
</feature>
<feature type="sequence variant" id="VAR_039797" description="In dbSNP:rs2199619.">
    <original>A</original>
    <variation>V</variation>
    <location>
        <position position="1318"/>
    </location>
</feature>
<feature type="sequence conflict" description="In Ref. 4; BAB70920." evidence="8" ref="4">
    <original>W</original>
    <variation>Y</variation>
    <location>
        <position position="426"/>
    </location>
</feature>
<feature type="sequence conflict" description="In Ref. 3; AAH42674." evidence="8" ref="3">
    <original>V</original>
    <variation>L</variation>
    <location>
        <position position="1186"/>
    </location>
</feature>
<dbReference type="EC" id="3.1.1.5" evidence="1"/>
<dbReference type="EC" id="3.1.1.4" evidence="1"/>
<dbReference type="EC" id="3.1.1.3" evidence="1"/>
<dbReference type="EMBL" id="AC074011">
    <property type="protein sequence ID" value="AAY24081.1"/>
    <property type="molecule type" value="Genomic_DNA"/>
</dbReference>
<dbReference type="EMBL" id="AC074011">
    <property type="protein sequence ID" value="AAY24082.1"/>
    <property type="molecule type" value="Genomic_DNA"/>
</dbReference>
<dbReference type="EMBL" id="AC093164">
    <property type="status" value="NOT_ANNOTATED_CDS"/>
    <property type="molecule type" value="Genomic_DNA"/>
</dbReference>
<dbReference type="EMBL" id="CH471053">
    <property type="protein sequence ID" value="EAX00532.1"/>
    <property type="molecule type" value="Genomic_DNA"/>
</dbReference>
<dbReference type="EMBL" id="CH471053">
    <property type="protein sequence ID" value="EAX00533.1"/>
    <property type="molecule type" value="Genomic_DNA"/>
</dbReference>
<dbReference type="EMBL" id="BC042674">
    <property type="protein sequence ID" value="AAH42674.1"/>
    <property type="molecule type" value="mRNA"/>
</dbReference>
<dbReference type="EMBL" id="BC065041">
    <property type="protein sequence ID" value="AAH65041.1"/>
    <property type="molecule type" value="mRNA"/>
</dbReference>
<dbReference type="EMBL" id="BC153864">
    <property type="protein sequence ID" value="AAI53865.1"/>
    <property type="molecule type" value="mRNA"/>
</dbReference>
<dbReference type="EMBL" id="AK055428">
    <property type="protein sequence ID" value="BAB70920.1"/>
    <property type="status" value="ALT_INIT"/>
    <property type="molecule type" value="mRNA"/>
</dbReference>
<dbReference type="CCDS" id="CCDS33168.1">
    <molecule id="Q6P1J6-1"/>
</dbReference>
<dbReference type="CCDS" id="CCDS54340.1">
    <molecule id="Q6P1J6-3"/>
</dbReference>
<dbReference type="RefSeq" id="NP_001164056.1">
    <molecule id="Q6P1J6-3"/>
    <property type="nucleotide sequence ID" value="NM_001170585.2"/>
</dbReference>
<dbReference type="RefSeq" id="NP_694566.4">
    <molecule id="Q6P1J6-1"/>
    <property type="nucleotide sequence ID" value="NM_153021.4"/>
</dbReference>
<dbReference type="RefSeq" id="XP_016858922.1">
    <property type="nucleotide sequence ID" value="XM_017003433.1"/>
</dbReference>
<dbReference type="BioGRID" id="127341">
    <property type="interactions" value="65"/>
</dbReference>
<dbReference type="FunCoup" id="Q6P1J6">
    <property type="interactions" value="319"/>
</dbReference>
<dbReference type="IntAct" id="Q6P1J6">
    <property type="interactions" value="27"/>
</dbReference>
<dbReference type="STRING" id="9606.ENSP00000330442"/>
<dbReference type="GlyCosmos" id="Q6P1J6">
    <property type="glycosylation" value="13 sites, No reported glycans"/>
</dbReference>
<dbReference type="GlyGen" id="Q6P1J6">
    <property type="glycosylation" value="14 sites"/>
</dbReference>
<dbReference type="iPTMnet" id="Q6P1J6"/>
<dbReference type="PhosphoSitePlus" id="Q6P1J6"/>
<dbReference type="BioMuta" id="PLB1"/>
<dbReference type="MassIVE" id="Q6P1J6"/>
<dbReference type="PaxDb" id="9606-ENSP00000330442"/>
<dbReference type="PeptideAtlas" id="Q6P1J6"/>
<dbReference type="ProteomicsDB" id="66829">
    <molecule id="Q6P1J6-1"/>
</dbReference>
<dbReference type="ProteomicsDB" id="66830">
    <molecule id="Q6P1J6-2"/>
</dbReference>
<dbReference type="ProteomicsDB" id="66831">
    <molecule id="Q6P1J6-3"/>
</dbReference>
<dbReference type="ProteomicsDB" id="66832">
    <molecule id="Q6P1J6-4"/>
</dbReference>
<dbReference type="ProteomicsDB" id="66833">
    <molecule id="Q6P1J6-5"/>
</dbReference>
<dbReference type="Antibodypedia" id="2675">
    <property type="antibodies" value="129 antibodies from 14 providers"/>
</dbReference>
<dbReference type="DNASU" id="151056"/>
<dbReference type="Ensembl" id="ENST00000327757.10">
    <molecule id="Q6P1J6-1"/>
    <property type="protein sequence ID" value="ENSP00000330442.5"/>
    <property type="gene ID" value="ENSG00000163803.13"/>
</dbReference>
<dbReference type="Ensembl" id="ENST00000422425.6">
    <molecule id="Q6P1J6-3"/>
    <property type="protein sequence ID" value="ENSP00000416440.2"/>
    <property type="gene ID" value="ENSG00000163803.13"/>
</dbReference>
<dbReference type="GeneID" id="151056"/>
<dbReference type="KEGG" id="hsa:151056"/>
<dbReference type="MANE-Select" id="ENST00000327757.10">
    <property type="protein sequence ID" value="ENSP00000330442.5"/>
    <property type="RefSeq nucleotide sequence ID" value="NM_153021.5"/>
    <property type="RefSeq protein sequence ID" value="NP_694566.4"/>
</dbReference>
<dbReference type="UCSC" id="uc002rmb.3">
    <molecule id="Q6P1J6-1"/>
    <property type="organism name" value="human"/>
</dbReference>
<dbReference type="AGR" id="HGNC:30041"/>
<dbReference type="CTD" id="151056"/>
<dbReference type="DisGeNET" id="151056"/>
<dbReference type="GeneCards" id="PLB1"/>
<dbReference type="HGNC" id="HGNC:30041">
    <property type="gene designation" value="PLB1"/>
</dbReference>
<dbReference type="HPA" id="ENSG00000163803">
    <property type="expression patterns" value="Tissue enriched (intestine)"/>
</dbReference>
<dbReference type="MalaCards" id="PLB1"/>
<dbReference type="MIM" id="610179">
    <property type="type" value="gene"/>
</dbReference>
<dbReference type="neXtProt" id="NX_Q6P1J6"/>
<dbReference type="OpenTargets" id="ENSG00000163803"/>
<dbReference type="PharmGKB" id="PA134891309"/>
<dbReference type="VEuPathDB" id="HostDB:ENSG00000163803"/>
<dbReference type="eggNOG" id="KOG3670">
    <property type="taxonomic scope" value="Eukaryota"/>
</dbReference>
<dbReference type="GeneTree" id="ENSGT00530000063883"/>
<dbReference type="HOGENOM" id="CLU_006677_0_0_1"/>
<dbReference type="InParanoid" id="Q6P1J6"/>
<dbReference type="OMA" id="KYMQRED"/>
<dbReference type="OrthoDB" id="10265800at2759"/>
<dbReference type="PAN-GO" id="Q6P1J6">
    <property type="GO annotations" value="5 GO annotations based on evolutionary models"/>
</dbReference>
<dbReference type="PhylomeDB" id="Q6P1J6"/>
<dbReference type="TreeFam" id="TF314942"/>
<dbReference type="PathwayCommons" id="Q6P1J6"/>
<dbReference type="Reactome" id="R-HSA-1482788">
    <property type="pathway name" value="Acyl chain remodelling of PC"/>
</dbReference>
<dbReference type="Reactome" id="R-HSA-975634">
    <property type="pathway name" value="Retinoid metabolism and transport"/>
</dbReference>
<dbReference type="SignaLink" id="Q6P1J6"/>
<dbReference type="BioGRID-ORCS" id="151056">
    <property type="hits" value="12 hits in 1141 CRISPR screens"/>
</dbReference>
<dbReference type="ChiTaRS" id="PLB1">
    <property type="organism name" value="human"/>
</dbReference>
<dbReference type="GenomeRNAi" id="151056"/>
<dbReference type="Pharos" id="Q6P1J6">
    <property type="development level" value="Tbio"/>
</dbReference>
<dbReference type="PRO" id="PR:Q6P1J6"/>
<dbReference type="Proteomes" id="UP000005640">
    <property type="component" value="Chromosome 2"/>
</dbReference>
<dbReference type="RNAct" id="Q6P1J6">
    <property type="molecule type" value="protein"/>
</dbReference>
<dbReference type="Bgee" id="ENSG00000163803">
    <property type="expression patterns" value="Expressed in adrenal tissue and 103 other cell types or tissues"/>
</dbReference>
<dbReference type="ExpressionAtlas" id="Q6P1J6">
    <property type="expression patterns" value="baseline and differential"/>
</dbReference>
<dbReference type="GO" id="GO:0016324">
    <property type="term" value="C:apical plasma membrane"/>
    <property type="evidence" value="ECO:0007669"/>
    <property type="project" value="UniProtKB-SubCell"/>
</dbReference>
<dbReference type="GO" id="GO:0031526">
    <property type="term" value="C:brush border membrane"/>
    <property type="evidence" value="ECO:0000318"/>
    <property type="project" value="GO_Central"/>
</dbReference>
<dbReference type="GO" id="GO:0005886">
    <property type="term" value="C:plasma membrane"/>
    <property type="evidence" value="ECO:0000304"/>
    <property type="project" value="Reactome"/>
</dbReference>
<dbReference type="GO" id="GO:0047499">
    <property type="term" value="F:calcium-independent phospholipase A2 activity"/>
    <property type="evidence" value="ECO:0007669"/>
    <property type="project" value="Ensembl"/>
</dbReference>
<dbReference type="GO" id="GO:0004622">
    <property type="term" value="F:lysophospholipase activity"/>
    <property type="evidence" value="ECO:0000318"/>
    <property type="project" value="GO_Central"/>
</dbReference>
<dbReference type="GO" id="GO:0004623">
    <property type="term" value="F:phospholipase A2 activity"/>
    <property type="evidence" value="ECO:0000318"/>
    <property type="project" value="GO_Central"/>
</dbReference>
<dbReference type="GO" id="GO:0050253">
    <property type="term" value="F:retinyl-palmitate esterase activity"/>
    <property type="evidence" value="ECO:0000318"/>
    <property type="project" value="GO_Central"/>
</dbReference>
<dbReference type="GO" id="GO:0004806">
    <property type="term" value="F:triacylglycerol lipase activity"/>
    <property type="evidence" value="ECO:0007669"/>
    <property type="project" value="UniProtKB-EC"/>
</dbReference>
<dbReference type="GO" id="GO:0046340">
    <property type="term" value="P:diacylglycerol catabolic process"/>
    <property type="evidence" value="ECO:0007669"/>
    <property type="project" value="Ensembl"/>
</dbReference>
<dbReference type="GO" id="GO:0036151">
    <property type="term" value="P:phosphatidylcholine acyl-chain remodeling"/>
    <property type="evidence" value="ECO:0000304"/>
    <property type="project" value="Reactome"/>
</dbReference>
<dbReference type="GO" id="GO:0034638">
    <property type="term" value="P:phosphatidylcholine catabolic process"/>
    <property type="evidence" value="ECO:0007669"/>
    <property type="project" value="Ensembl"/>
</dbReference>
<dbReference type="GO" id="GO:0046338">
    <property type="term" value="P:phosphatidylethanolamine catabolic process"/>
    <property type="evidence" value="ECO:0007669"/>
    <property type="project" value="Ensembl"/>
</dbReference>
<dbReference type="GO" id="GO:0034478">
    <property type="term" value="P:phosphatidylglycerol catabolic process"/>
    <property type="evidence" value="ECO:0007669"/>
    <property type="project" value="Ensembl"/>
</dbReference>
<dbReference type="GO" id="GO:0006644">
    <property type="term" value="P:phospholipid metabolic process"/>
    <property type="evidence" value="ECO:0000318"/>
    <property type="project" value="GO_Central"/>
</dbReference>
<dbReference type="GO" id="GO:2000344">
    <property type="term" value="P:positive regulation of acrosome reaction"/>
    <property type="evidence" value="ECO:0007669"/>
    <property type="project" value="Ensembl"/>
</dbReference>
<dbReference type="GO" id="GO:0001523">
    <property type="term" value="P:retinoid metabolic process"/>
    <property type="evidence" value="ECO:0000304"/>
    <property type="project" value="Reactome"/>
</dbReference>
<dbReference type="GO" id="GO:0019433">
    <property type="term" value="P:triglyceride catabolic process"/>
    <property type="evidence" value="ECO:0007669"/>
    <property type="project" value="Ensembl"/>
</dbReference>
<dbReference type="CDD" id="cd01824">
    <property type="entry name" value="Phospholipase_B_like"/>
    <property type="match status" value="4"/>
</dbReference>
<dbReference type="FunFam" id="3.40.50.1110:FF:000005">
    <property type="entry name" value="Phospholipase B1"/>
    <property type="match status" value="1"/>
</dbReference>
<dbReference type="Gene3D" id="3.40.50.1110">
    <property type="entry name" value="SGNH hydrolase"/>
    <property type="match status" value="3"/>
</dbReference>
<dbReference type="InterPro" id="IPR001087">
    <property type="entry name" value="GDSL"/>
</dbReference>
<dbReference type="InterPro" id="IPR008265">
    <property type="entry name" value="Lipase_GDSL_AS"/>
</dbReference>
<dbReference type="InterPro" id="IPR035547">
    <property type="entry name" value="Phospholipase_B"/>
</dbReference>
<dbReference type="InterPro" id="IPR038885">
    <property type="entry name" value="PLB1"/>
</dbReference>
<dbReference type="InterPro" id="IPR036514">
    <property type="entry name" value="SGNH_hydro_sf"/>
</dbReference>
<dbReference type="PANTHER" id="PTHR21325">
    <property type="entry name" value="PHOSPHOLIPASE B, PLB1"/>
    <property type="match status" value="1"/>
</dbReference>
<dbReference type="PANTHER" id="PTHR21325:SF52">
    <property type="entry name" value="PHOSPHOLIPASE B1, MEMBRANE-ASSOCIATED"/>
    <property type="match status" value="1"/>
</dbReference>
<dbReference type="Pfam" id="PF00657">
    <property type="entry name" value="Lipase_GDSL"/>
    <property type="match status" value="3"/>
</dbReference>
<dbReference type="SUPFAM" id="SSF52266">
    <property type="entry name" value="SGNH hydrolase"/>
    <property type="match status" value="3"/>
</dbReference>
<dbReference type="PROSITE" id="PS01098">
    <property type="entry name" value="LIPASE_GDSL_SER"/>
    <property type="match status" value="2"/>
</dbReference>
<keyword id="KW-0025">Alternative splicing</keyword>
<keyword id="KW-1003">Cell membrane</keyword>
<keyword id="KW-0325">Glycoprotein</keyword>
<keyword id="KW-0378">Hydrolase</keyword>
<keyword id="KW-0443">Lipid metabolism</keyword>
<keyword id="KW-0472">Membrane</keyword>
<keyword id="KW-1208">Phospholipid metabolism</keyword>
<keyword id="KW-1267">Proteomics identification</keyword>
<keyword id="KW-1185">Reference proteome</keyword>
<keyword id="KW-0677">Repeat</keyword>
<keyword id="KW-0732">Signal</keyword>
<keyword id="KW-0812">Transmembrane</keyword>
<keyword id="KW-1133">Transmembrane helix</keyword>
<organism>
    <name type="scientific">Homo sapiens</name>
    <name type="common">Human</name>
    <dbReference type="NCBI Taxonomy" id="9606"/>
    <lineage>
        <taxon>Eukaryota</taxon>
        <taxon>Metazoa</taxon>
        <taxon>Chordata</taxon>
        <taxon>Craniata</taxon>
        <taxon>Vertebrata</taxon>
        <taxon>Euteleostomi</taxon>
        <taxon>Mammalia</taxon>
        <taxon>Eutheria</taxon>
        <taxon>Euarchontoglires</taxon>
        <taxon>Primates</taxon>
        <taxon>Haplorrhini</taxon>
        <taxon>Catarrhini</taxon>
        <taxon>Hominidae</taxon>
        <taxon>Homo</taxon>
    </lineage>
</organism>
<accession>Q6P1J6</accession>
<accession>A8KAX2</accession>
<accession>Q53S03</accession>
<accession>Q8IUP7</accession>
<accession>Q96DP9</accession>
<sequence length="1458" mass="163081">MGLRPGIFLLELLLLLGQGTPQIHTSPRKSTLEGQLWPETLKNSPFPCNPNKLGVNMPSKSVHSLKPSDIKFVAAIGNLEIPPDPGTGDLEKQDWTERPQQVCMGVMTVLSDIIRYFSPSVPMPVCHTGKRVIPHDGAEDLWIQAQELVRNMKENLQLDFQFDWKLINVFFSNASQCYLCPSAQQNGLAAGGVDELMGVLDYLQQEVPRAFVNLVDLSEVAEVSRQYHGTWLSPAPEPCNCSEETTRLAKVVMQWSYQEAWNSLLASSRYSEQESFTVVFQPFFYETTPSLHSEDPRLQDSTTLAWHLWNRMMEPAGEKDEPLSVKHGRPMKCPSQESPYLFSYRNSNYLTRLQKPQDKLEVREGAEIRCPDKDPSDTVPTSVHRLKPADINVIGALGDSLTAGNGAGSTPGNVLDVLTQYRGLSWSVGGDENIGTVTTLANILREFNPSLKGFSVGTGKETSPNAFLNQAVAGGRAEDLPVQARRLVDLMKNDTRIHFQEDWKIITLFIGGNDLCDFCNDLVHYSPQNFTDNIGKALDILHAEVPRAFVNLVTVLEIVNLRELYQEKKVYCPRMILRSLCPCVLKFDDNSTELATLIEFNKKFQEKTHQLIESGRYDTREDFTVVVQPFFENVDMPKTSEGLPDNSFFAPDCFHFSSKSHSRAASALWNNMLEPVGQKTTRHKFENKINITCPNQVQPFLRTYKNSMQGHGTWLPCRDRAPSALHPTSVHALRPADIQVVAALGDSLTAGNGIGSKPDDLPDVTTQYRGLSYSAGGDGSLENVTTLPNILREFNRNLTGYAVGTGDANDTNAFLNQAVPGAKAEDLMSQVQTLMQKMKDDHRVNFHEDWKVITVLIGGSDLCDYCTDSNLYSAANFVHHLRNALDVLHREVPRVLVNLVDFLNPTIMRQVFLGNPDKCPVQQASVLCNCVLTLRENSQELARLEAFSRAYRSSMRELVGSGRYDTQEDFSVVLQPFFQNIQLPVLADGLPDTSFFAPDCIHPNQKFHSQLARALWTNMLEPLGSKTETLDLRAEMPITCPTQNEPFLRTPRNSNYTYPIKPAIENWGSDFLCTEWKASNSVPTSVHQLRPADIKVVAALGDSLTTAVGARPNNSSDLPTSWRGLSWSIGGDGNLETHTTLPNILKKFNPYLLGFSTSTWEGTAGLNVAAEGARARDMPAQAWDLVERMKNSPDINLEKDWKLVTLFIGVNDLCHYCENPEAHLATEYVQHIQQALDILSEELPRAFVNVVEVMELASLYQGQGGKCAMLAAQNNCTCLRHSQSSLEKQELKKVNWNLQHGISSFSYWHQYTQREDFAVVVQPFFQNTLTPLNERGDTDLTFFSEDCFHFSDRGHAEMAIALWNNMLEPVGRKTTSNNFTHSRAKLKCPSPESPYLYTLRNSRLLPDQAEEAPEVLYWAVPVAAGVGLVVGIIGTVVWRCRRGGRREDPPMSLRTVAL</sequence>
<protein>
    <recommendedName>
        <fullName>Phospholipase B1, membrane-associated</fullName>
        <shortName>Phospholipase B</shortName>
        <shortName>hPLB</shortName>
    </recommendedName>
    <alternativeName>
        <fullName>Lysophospholipase</fullName>
        <ecNumber evidence="1">3.1.1.5</ecNumber>
    </alternativeName>
    <alternativeName>
        <fullName>Phospholipase A2</fullName>
        <ecNumber evidence="1">3.1.1.4</ecNumber>
    </alternativeName>
    <alternativeName>
        <fullName>Phospholipase B/lipase</fullName>
        <shortName>PLB/LIP</shortName>
    </alternativeName>
    <alternativeName>
        <fullName>Triacylglycerol lipase</fullName>
        <ecNumber evidence="1">3.1.1.3</ecNumber>
    </alternativeName>
</protein>
<comment type="function">
    <text evidence="1 2">Calcium-independent membrane-associated phospholipase that catalyzes complete diacylation of phospholipids by hydrolyzing both sn-1 and sn-2 fatty acyl chains attached to the glycerol backbone (phospholipase B activity) (By similarity). Has dual phospholipase and lysophospholipase activities toward diacylphospholipids. Preferentially cleaves sn-2 ester bonds over sn-1 bonds. Acts as a lipase toward glycerolipid substrates (By similarity). Hydrolyzes fatty acyl chains of diacylglycerols with preference for the sn-2 position and of triacylglycerols with not positional selectivity (By similarity). May also hydrolyze long chain retinyl esters such as retinyl palmitate (By similarity). May contribute to digestion of dietary phospholipids, glycerolipids and retinoids, facilitating lipid absorption at the brush border (By similarity).</text>
</comment>
<comment type="catalytic activity">
    <reaction evidence="1">
        <text>a 1,2-diacyl-sn-glycero-3-phosphocholine + H2O = a 1-acyl-sn-glycero-3-phosphocholine + a fatty acid + H(+)</text>
        <dbReference type="Rhea" id="RHEA:15801"/>
        <dbReference type="ChEBI" id="CHEBI:15377"/>
        <dbReference type="ChEBI" id="CHEBI:15378"/>
        <dbReference type="ChEBI" id="CHEBI:28868"/>
        <dbReference type="ChEBI" id="CHEBI:57643"/>
        <dbReference type="ChEBI" id="CHEBI:58168"/>
        <dbReference type="EC" id="3.1.1.4"/>
    </reaction>
    <physiologicalReaction direction="left-to-right" evidence="1">
        <dbReference type="Rhea" id="RHEA:15802"/>
    </physiologicalReaction>
</comment>
<comment type="catalytic activity">
    <reaction evidence="1">
        <text>a 1-O-alkyl-2-acyl-sn-glycero-3-phosphocholine + H2O = a 1-O-alkyl-sn-glycero-3-phosphocholine + a fatty acid + H(+)</text>
        <dbReference type="Rhea" id="RHEA:36231"/>
        <dbReference type="ChEBI" id="CHEBI:15377"/>
        <dbReference type="ChEBI" id="CHEBI:15378"/>
        <dbReference type="ChEBI" id="CHEBI:28868"/>
        <dbReference type="ChEBI" id="CHEBI:30909"/>
        <dbReference type="ChEBI" id="CHEBI:36702"/>
        <dbReference type="EC" id="3.1.1.4"/>
    </reaction>
    <physiologicalReaction direction="left-to-right" evidence="1">
        <dbReference type="Rhea" id="RHEA:36232"/>
    </physiologicalReaction>
</comment>
<comment type="catalytic activity">
    <reaction evidence="1">
        <text>a 1-acyl-sn-glycero-3-phosphocholine + H2O = sn-glycerol 3-phosphocholine + a fatty acid + H(+)</text>
        <dbReference type="Rhea" id="RHEA:15177"/>
        <dbReference type="ChEBI" id="CHEBI:15377"/>
        <dbReference type="ChEBI" id="CHEBI:15378"/>
        <dbReference type="ChEBI" id="CHEBI:16870"/>
        <dbReference type="ChEBI" id="CHEBI:28868"/>
        <dbReference type="ChEBI" id="CHEBI:58168"/>
        <dbReference type="EC" id="3.1.1.5"/>
    </reaction>
    <physiologicalReaction direction="left-to-right" evidence="1">
        <dbReference type="Rhea" id="RHEA:15178"/>
    </physiologicalReaction>
</comment>
<comment type="catalytic activity">
    <reaction evidence="1">
        <text>a triacylglycerol + H2O = a diacylglycerol + a fatty acid + H(+)</text>
        <dbReference type="Rhea" id="RHEA:12044"/>
        <dbReference type="ChEBI" id="CHEBI:15377"/>
        <dbReference type="ChEBI" id="CHEBI:15378"/>
        <dbReference type="ChEBI" id="CHEBI:17855"/>
        <dbReference type="ChEBI" id="CHEBI:18035"/>
        <dbReference type="ChEBI" id="CHEBI:28868"/>
        <dbReference type="EC" id="3.1.1.3"/>
    </reaction>
    <physiologicalReaction direction="left-to-right" evidence="1">
        <dbReference type="Rhea" id="RHEA:12045"/>
    </physiologicalReaction>
</comment>
<comment type="catalytic activity">
    <reaction evidence="1">
        <text>1,2-dihexadecanoyl-sn-glycero-3-phosphocholine + H2O = 1-hexadecanoyl-sn-glycero-3-phosphocholine + hexadecanoate + H(+)</text>
        <dbReference type="Rhea" id="RHEA:41223"/>
        <dbReference type="ChEBI" id="CHEBI:7896"/>
        <dbReference type="ChEBI" id="CHEBI:15377"/>
        <dbReference type="ChEBI" id="CHEBI:15378"/>
        <dbReference type="ChEBI" id="CHEBI:72998"/>
        <dbReference type="ChEBI" id="CHEBI:72999"/>
    </reaction>
    <physiologicalReaction direction="left-to-right" evidence="1">
        <dbReference type="Rhea" id="RHEA:41224"/>
    </physiologicalReaction>
</comment>
<comment type="catalytic activity">
    <reaction evidence="1">
        <text>1-hexadecanoyl-2-(9Z-octadecenoyl)-sn-glycero-3-phosphocholine + H2O = 1-hexadecanoyl-sn-glycero-3-phosphocholine + (9Z)-octadecenoate + H(+)</text>
        <dbReference type="Rhea" id="RHEA:38779"/>
        <dbReference type="ChEBI" id="CHEBI:15377"/>
        <dbReference type="ChEBI" id="CHEBI:15378"/>
        <dbReference type="ChEBI" id="CHEBI:30823"/>
        <dbReference type="ChEBI" id="CHEBI:72998"/>
        <dbReference type="ChEBI" id="CHEBI:73001"/>
    </reaction>
    <physiologicalReaction direction="left-to-right" evidence="1">
        <dbReference type="Rhea" id="RHEA:38780"/>
    </physiologicalReaction>
</comment>
<comment type="catalytic activity">
    <reaction evidence="1">
        <text>1,2-di-(9Z-octadecenoyl)-sn-glycero-3-phosphocholine + H2O = 1-(9Z-octadecenoyl)-sn-glycero-3-phosphocholine + (9Z)-octadecenoate + H(+)</text>
        <dbReference type="Rhea" id="RHEA:40923"/>
        <dbReference type="ChEBI" id="CHEBI:15377"/>
        <dbReference type="ChEBI" id="CHEBI:15378"/>
        <dbReference type="ChEBI" id="CHEBI:28610"/>
        <dbReference type="ChEBI" id="CHEBI:30823"/>
        <dbReference type="ChEBI" id="CHEBI:74669"/>
    </reaction>
    <physiologicalReaction direction="left-to-right" evidence="1">
        <dbReference type="Rhea" id="RHEA:40924"/>
    </physiologicalReaction>
</comment>
<comment type="catalytic activity">
    <reaction evidence="2">
        <text>1-hexadecanoyl-2-(9Z,12Z-octadecadienoyl)-sn-glycero-3-phosphocholine + H2O = (9Z,12Z)-octadecadienoate + 1-hexadecanoyl-sn-glycero-3-phosphocholine + H(+)</text>
        <dbReference type="Rhea" id="RHEA:40811"/>
        <dbReference type="ChEBI" id="CHEBI:15377"/>
        <dbReference type="ChEBI" id="CHEBI:15378"/>
        <dbReference type="ChEBI" id="CHEBI:30245"/>
        <dbReference type="ChEBI" id="CHEBI:72998"/>
        <dbReference type="ChEBI" id="CHEBI:73002"/>
    </reaction>
    <physiologicalReaction direction="left-to-right" evidence="2">
        <dbReference type="Rhea" id="RHEA:40812"/>
    </physiologicalReaction>
</comment>
<comment type="catalytic activity">
    <reaction evidence="2">
        <text>1-hexadecanoyl-2-(9Z,12Z-octadecadienoyl)-sn-glycero-3-phosphocholine + H2O = 2-(9Z,12Z-octadecadienoyl)-sn-glycero-3-phosphocholine + hexadecanoate + H(+)</text>
        <dbReference type="Rhea" id="RHEA:40971"/>
        <dbReference type="ChEBI" id="CHEBI:7896"/>
        <dbReference type="ChEBI" id="CHEBI:15377"/>
        <dbReference type="ChEBI" id="CHEBI:15378"/>
        <dbReference type="ChEBI" id="CHEBI:73002"/>
        <dbReference type="ChEBI" id="CHEBI:76084"/>
    </reaction>
    <physiologicalReaction direction="left-to-right" evidence="2">
        <dbReference type="Rhea" id="RHEA:40972"/>
    </physiologicalReaction>
</comment>
<comment type="catalytic activity">
    <reaction evidence="1">
        <text>1-hexadecanoyl-2-(9Z-octadecenoyl)-sn-glycero-3-phosphoethanolamine + H2O = 1-hexadecanoyl-sn-glycero-3-phosphoethanolamine + (9Z)-octadecenoate + H(+)</text>
        <dbReference type="Rhea" id="RHEA:40911"/>
        <dbReference type="ChEBI" id="CHEBI:15377"/>
        <dbReference type="ChEBI" id="CHEBI:15378"/>
        <dbReference type="ChEBI" id="CHEBI:30823"/>
        <dbReference type="ChEBI" id="CHEBI:73004"/>
        <dbReference type="ChEBI" id="CHEBI:73007"/>
    </reaction>
    <physiologicalReaction direction="left-to-right" evidence="1">
        <dbReference type="Rhea" id="RHEA:40912"/>
    </physiologicalReaction>
</comment>
<comment type="catalytic activity">
    <reaction evidence="1">
        <text>1-hexadecanoyl-2-(9Z-octadecenoyl)-sn-glycero-3-phospho-(1'-sn-glycerol) + H2O = 1-hexadecanoyl-sn-glycero-3-phospho-(1'-sn-glycerol) + (9Z)-octadecenoate + H(+)</text>
        <dbReference type="Rhea" id="RHEA:40919"/>
        <dbReference type="ChEBI" id="CHEBI:15377"/>
        <dbReference type="ChEBI" id="CHEBI:15378"/>
        <dbReference type="ChEBI" id="CHEBI:30823"/>
        <dbReference type="ChEBI" id="CHEBI:72841"/>
        <dbReference type="ChEBI" id="CHEBI:75158"/>
    </reaction>
    <physiologicalReaction direction="left-to-right" evidence="1">
        <dbReference type="Rhea" id="RHEA:40920"/>
    </physiologicalReaction>
</comment>
<comment type="catalytic activity">
    <reaction evidence="2">
        <text>1,2-dihexadecanoyl-sn-glycero-3-phosphocholine + 2 H2O = sn-glycerol 3-phosphocholine + 2 hexadecanoate + 2 H(+)</text>
        <dbReference type="Rhea" id="RHEA:40975"/>
        <dbReference type="ChEBI" id="CHEBI:7896"/>
        <dbReference type="ChEBI" id="CHEBI:15377"/>
        <dbReference type="ChEBI" id="CHEBI:15378"/>
        <dbReference type="ChEBI" id="CHEBI:16870"/>
        <dbReference type="ChEBI" id="CHEBI:72999"/>
    </reaction>
    <physiologicalReaction direction="left-to-right" evidence="2">
        <dbReference type="Rhea" id="RHEA:40976"/>
    </physiologicalReaction>
</comment>
<comment type="catalytic activity">
    <reaction evidence="1">
        <text>1-O-hexadecyl-2-(9Z)-octadecenoyl-sn-glycero-3-phosphocholine + H2O = 1-O-hexadecyl-sn-glycero-3-phosphocholine + (9Z)-octadecenoate + H(+)</text>
        <dbReference type="Rhea" id="RHEA:40915"/>
        <dbReference type="ChEBI" id="CHEBI:15377"/>
        <dbReference type="ChEBI" id="CHEBI:15378"/>
        <dbReference type="ChEBI" id="CHEBI:30823"/>
        <dbReference type="ChEBI" id="CHEBI:34112"/>
        <dbReference type="ChEBI" id="CHEBI:64496"/>
    </reaction>
    <physiologicalReaction direction="left-to-right" evidence="1">
        <dbReference type="Rhea" id="RHEA:40916"/>
    </physiologicalReaction>
</comment>
<comment type="catalytic activity">
    <reaction evidence="1">
        <text>1-hexadecanoyl-sn-glycero-3-phosphocholine + H2O = sn-glycerol 3-phosphocholine + hexadecanoate + H(+)</text>
        <dbReference type="Rhea" id="RHEA:40435"/>
        <dbReference type="ChEBI" id="CHEBI:7896"/>
        <dbReference type="ChEBI" id="CHEBI:15377"/>
        <dbReference type="ChEBI" id="CHEBI:15378"/>
        <dbReference type="ChEBI" id="CHEBI:16870"/>
        <dbReference type="ChEBI" id="CHEBI:72998"/>
    </reaction>
    <physiologicalReaction direction="left-to-right" evidence="1">
        <dbReference type="Rhea" id="RHEA:40436"/>
    </physiologicalReaction>
</comment>
<comment type="catalytic activity">
    <reaction evidence="1">
        <text>1,2,3-tri-(9Z-octadecenoyl)-glycerol + H2O = di-(9Z)-octadecenoylglycerol + (9Z)-octadecenoate + H(+)</text>
        <dbReference type="Rhea" id="RHEA:38575"/>
        <dbReference type="ChEBI" id="CHEBI:15377"/>
        <dbReference type="ChEBI" id="CHEBI:15378"/>
        <dbReference type="ChEBI" id="CHEBI:30823"/>
        <dbReference type="ChEBI" id="CHEBI:53753"/>
        <dbReference type="ChEBI" id="CHEBI:75945"/>
    </reaction>
    <physiologicalReaction direction="left-to-right" evidence="1">
        <dbReference type="Rhea" id="RHEA:38576"/>
    </physiologicalReaction>
</comment>
<comment type="catalytic activity">
    <reaction evidence="1">
        <text>1-hexadecanoyl-2-(9Z)-octadecenoyl-3-octadecanoyl-sn-glycerol + H2O = 1-hexadecanoyl-2-(9Z-octadecenoyl)-sn-glycerol + octadecanoate + H(+)</text>
        <dbReference type="Rhea" id="RHEA:41111"/>
        <dbReference type="ChEBI" id="CHEBI:15377"/>
        <dbReference type="ChEBI" id="CHEBI:15378"/>
        <dbReference type="ChEBI" id="CHEBI:25629"/>
        <dbReference type="ChEBI" id="CHEBI:75466"/>
        <dbReference type="ChEBI" id="CHEBI:77623"/>
    </reaction>
    <physiologicalReaction direction="left-to-right" evidence="1">
        <dbReference type="Rhea" id="RHEA:41112"/>
    </physiologicalReaction>
</comment>
<comment type="catalytic activity">
    <reaction evidence="1">
        <text>1,3-dihexadecanoyl-2-(9Z-octadecenoyl)glycerol + H2O = 1,3-dihexadecanoylglycerol + (9Z)-octadecenoate + H(+)</text>
        <dbReference type="Rhea" id="RHEA:40983"/>
        <dbReference type="ChEBI" id="CHEBI:15377"/>
        <dbReference type="ChEBI" id="CHEBI:15378"/>
        <dbReference type="ChEBI" id="CHEBI:30823"/>
        <dbReference type="ChEBI" id="CHEBI:75688"/>
        <dbReference type="ChEBI" id="CHEBI:77619"/>
    </reaction>
    <physiologicalReaction direction="left-to-right" evidence="1">
        <dbReference type="Rhea" id="RHEA:40984"/>
    </physiologicalReaction>
</comment>
<comment type="catalytic activity">
    <reaction evidence="1">
        <text>1,3-dihexadecanoyl-2-(9Z-octadecenoyl)glycerol + H2O = 1-hexadecanoyl-2-(9Z-octadecenoyl)-glycerol + hexadecanoate + H(+)</text>
        <dbReference type="Rhea" id="RHEA:40979"/>
        <dbReference type="ChEBI" id="CHEBI:7896"/>
        <dbReference type="ChEBI" id="CHEBI:15377"/>
        <dbReference type="ChEBI" id="CHEBI:15378"/>
        <dbReference type="ChEBI" id="CHEBI:75585"/>
        <dbReference type="ChEBI" id="CHEBI:75688"/>
    </reaction>
    <physiologicalReaction direction="left-to-right" evidence="1">
        <dbReference type="Rhea" id="RHEA:40980"/>
    </physiologicalReaction>
</comment>
<comment type="catalytic activity">
    <reaction evidence="1">
        <text>1-hexadecanoyl-2-(9Z)-octadecenoyl-3-octadecanoyl-sn-glycerol + H2O = 1-hexadecanoyl-3-octadecanoyl-sn-glycerol + (9Z)-octadecenoate + H(+)</text>
        <dbReference type="Rhea" id="RHEA:41103"/>
        <dbReference type="ChEBI" id="CHEBI:15377"/>
        <dbReference type="ChEBI" id="CHEBI:15378"/>
        <dbReference type="ChEBI" id="CHEBI:30823"/>
        <dbReference type="ChEBI" id="CHEBI:77623"/>
        <dbReference type="ChEBI" id="CHEBI:77624"/>
    </reaction>
    <physiologicalReaction direction="left-to-right" evidence="1">
        <dbReference type="Rhea" id="RHEA:41104"/>
    </physiologicalReaction>
</comment>
<comment type="catalytic activity">
    <reaction evidence="1">
        <text>1-hexadecanoyl-2-(9Z)-octadecenoyl-3-octadecanoyl-sn-glycerol + H2O = 2-(9Z-octadecenoyl)-3-octadecanoyl-sn-glycerol + hexadecanoate + H(+)</text>
        <dbReference type="Rhea" id="RHEA:41107"/>
        <dbReference type="ChEBI" id="CHEBI:7896"/>
        <dbReference type="ChEBI" id="CHEBI:15377"/>
        <dbReference type="ChEBI" id="CHEBI:15378"/>
        <dbReference type="ChEBI" id="CHEBI:75558"/>
        <dbReference type="ChEBI" id="CHEBI:77623"/>
    </reaction>
    <physiologicalReaction direction="left-to-right" evidence="1">
        <dbReference type="Rhea" id="RHEA:41108"/>
    </physiologicalReaction>
</comment>
<comment type="catalytic activity">
    <reaction evidence="1">
        <text>1-octadecanoyl-2-(9Z,12Z)-octadecadienoyl-sn-glycerol + H2O = 1-octadecanoyl-sn-glycerol + (9Z,12Z)-octadecadienoate + H(+)</text>
        <dbReference type="Rhea" id="RHEA:40927"/>
        <dbReference type="ChEBI" id="CHEBI:15377"/>
        <dbReference type="ChEBI" id="CHEBI:15378"/>
        <dbReference type="ChEBI" id="CHEBI:30245"/>
        <dbReference type="ChEBI" id="CHEBI:75550"/>
        <dbReference type="ChEBI" id="CHEBI:77097"/>
    </reaction>
    <physiologicalReaction direction="left-to-right" evidence="1">
        <dbReference type="Rhea" id="RHEA:40928"/>
    </physiologicalReaction>
</comment>
<comment type="catalytic activity">
    <reaction evidence="1">
        <text>1,2-di-(9Z-octadecenoyl)-sn-glycerol + H2O = 1-(9Z-octadecenoyl)-sn-glycerol + (9Z)-octadecenoate + H(+)</text>
        <dbReference type="Rhea" id="RHEA:41219"/>
        <dbReference type="ChEBI" id="CHEBI:15377"/>
        <dbReference type="ChEBI" id="CHEBI:15378"/>
        <dbReference type="ChEBI" id="CHEBI:30823"/>
        <dbReference type="ChEBI" id="CHEBI:52333"/>
        <dbReference type="ChEBI" id="CHEBI:75757"/>
    </reaction>
    <physiologicalReaction direction="left-to-right" evidence="1">
        <dbReference type="Rhea" id="RHEA:41220"/>
    </physiologicalReaction>
</comment>
<comment type="catalytic activity">
    <reaction evidence="1">
        <text>2,3-di-(9Z)-octadecenoyl-sn-glycerol + H2O = 3-(9Z-octadecenoyl)-sn-glycerol + (9Z)-octadecenoate + H(+)</text>
        <dbReference type="Rhea" id="RHEA:42604"/>
        <dbReference type="ChEBI" id="CHEBI:15377"/>
        <dbReference type="ChEBI" id="CHEBI:15378"/>
        <dbReference type="ChEBI" id="CHEBI:30823"/>
        <dbReference type="ChEBI" id="CHEBI:75824"/>
        <dbReference type="ChEBI" id="CHEBI:75938"/>
    </reaction>
    <physiologicalReaction direction="left-to-right" evidence="1">
        <dbReference type="Rhea" id="RHEA:42605"/>
    </physiologicalReaction>
</comment>
<comment type="catalytic activity">
    <reaction evidence="2">
        <text>1,3-di-(9Z-octadecenoyl)-glycerol + H2O = 1-(9Z-octadecenoyl)-glycerol + (9Z)-octadecenoate + H(+)</text>
        <dbReference type="Rhea" id="RHEA:39939"/>
        <dbReference type="ChEBI" id="CHEBI:15377"/>
        <dbReference type="ChEBI" id="CHEBI:15378"/>
        <dbReference type="ChEBI" id="CHEBI:30823"/>
        <dbReference type="ChEBI" id="CHEBI:75342"/>
        <dbReference type="ChEBI" id="CHEBI:75735"/>
    </reaction>
    <physiologicalReaction direction="left-to-right" evidence="2">
        <dbReference type="Rhea" id="RHEA:39940"/>
    </physiologicalReaction>
</comment>
<comment type="catalytic activity">
    <reaction evidence="2">
        <text>1-(9Z-octadecenoyl)-glycerol + H2O = glycerol + (9Z)-octadecenoate + H(+)</text>
        <dbReference type="Rhea" id="RHEA:38487"/>
        <dbReference type="ChEBI" id="CHEBI:15377"/>
        <dbReference type="ChEBI" id="CHEBI:15378"/>
        <dbReference type="ChEBI" id="CHEBI:17754"/>
        <dbReference type="ChEBI" id="CHEBI:30823"/>
        <dbReference type="ChEBI" id="CHEBI:75342"/>
    </reaction>
    <physiologicalReaction direction="left-to-right" evidence="2">
        <dbReference type="Rhea" id="RHEA:38488"/>
    </physiologicalReaction>
</comment>
<comment type="catalytic activity">
    <reaction evidence="2">
        <text>2-(9Z-octadecenoyl)-glycerol + H2O = glycerol + (9Z)-octadecenoate + H(+)</text>
        <dbReference type="Rhea" id="RHEA:38491"/>
        <dbReference type="ChEBI" id="CHEBI:15377"/>
        <dbReference type="ChEBI" id="CHEBI:15378"/>
        <dbReference type="ChEBI" id="CHEBI:17754"/>
        <dbReference type="ChEBI" id="CHEBI:30823"/>
        <dbReference type="ChEBI" id="CHEBI:73990"/>
    </reaction>
    <physiologicalReaction direction="left-to-right" evidence="2">
        <dbReference type="Rhea" id="RHEA:38492"/>
    </physiologicalReaction>
</comment>
<comment type="interaction">
    <interactant intactId="EBI-10694821">
        <id>Q6P1J6-2</id>
    </interactant>
    <interactant intactId="EBI-725515">
        <id>O43559</id>
        <label>FRS3</label>
    </interactant>
    <organismsDiffer>false</organismsDiffer>
    <experiments>3</experiments>
</comment>
<comment type="interaction">
    <interactant intactId="EBI-10694821">
        <id>Q6P1J6-2</id>
    </interactant>
    <interactant intactId="EBI-744302">
        <id>P14136</id>
        <label>GFAP</label>
    </interactant>
    <organismsDiffer>false</organismsDiffer>
    <experiments>3</experiments>
</comment>
<comment type="interaction">
    <interactant intactId="EBI-10694821">
        <id>Q6P1J6-2</id>
    </interactant>
    <interactant intactId="EBI-8561769">
        <id>Q5SUL5</id>
        <label>HLA-A</label>
    </interactant>
    <organismsDiffer>false</organismsDiffer>
    <experiments>3</experiments>
</comment>
<comment type="interaction">
    <interactant intactId="EBI-10694821">
        <id>Q6P1J6-2</id>
    </interactant>
    <interactant intactId="EBI-7116203">
        <id>O75031</id>
        <label>HSF2BP</label>
    </interactant>
    <organismsDiffer>false</organismsDiffer>
    <experiments>3</experiments>
</comment>
<comment type="interaction">
    <interactant intactId="EBI-10694821">
        <id>Q6P1J6-2</id>
    </interactant>
    <interactant intactId="EBI-1055254">
        <id>Q8WXH2</id>
        <label>JPH3</label>
    </interactant>
    <organismsDiffer>false</organismsDiffer>
    <experiments>3</experiments>
</comment>
<comment type="interaction">
    <interactant intactId="EBI-10694821">
        <id>Q6P1J6-2</id>
    </interactant>
    <interactant intactId="EBI-399080">
        <id>Q92993</id>
        <label>KAT5</label>
    </interactant>
    <organismsDiffer>false</organismsDiffer>
    <experiments>3</experiments>
</comment>
<comment type="interaction">
    <interactant intactId="EBI-10694821">
        <id>Q6P1J6-2</id>
    </interactant>
    <interactant intactId="EBI-948266">
        <id>O14901</id>
        <label>KLF11</label>
    </interactant>
    <organismsDiffer>false</organismsDiffer>
    <experiments>3</experiments>
</comment>
<comment type="interaction">
    <interactant intactId="EBI-10694821">
        <id>Q6P1J6-2</id>
    </interactant>
    <interactant intactId="EBI-11742507">
        <id>Q8TAP4-4</id>
        <label>LMO3</label>
    </interactant>
    <organismsDiffer>false</organismsDiffer>
    <experiments>3</experiments>
</comment>
<comment type="interaction">
    <interactant intactId="EBI-10694821">
        <id>Q6P1J6-2</id>
    </interactant>
    <interactant intactId="EBI-4314821">
        <id>Q13449</id>
        <label>LSAMP</label>
    </interactant>
    <organismsDiffer>false</organismsDiffer>
    <experiments>3</experiments>
</comment>
<comment type="interaction">
    <interactant intactId="EBI-10694821">
        <id>Q6P1J6-2</id>
    </interactant>
    <interactant intactId="EBI-713665">
        <id>P19404</id>
        <label>NDUFV2</label>
    </interactant>
    <organismsDiffer>false</organismsDiffer>
    <experiments>3</experiments>
</comment>
<comment type="interaction">
    <interactant intactId="EBI-10694821">
        <id>Q6P1J6-2</id>
    </interactant>
    <interactant intactId="EBI-1383528">
        <id>P17252</id>
        <label>PRKCA</label>
    </interactant>
    <organismsDiffer>false</organismsDiffer>
    <experiments>3</experiments>
</comment>
<comment type="interaction">
    <interactant intactId="EBI-10694821">
        <id>Q6P1J6-2</id>
    </interactant>
    <interactant intactId="EBI-9090795">
        <id>Q15047-2</id>
        <label>SETDB1</label>
    </interactant>
    <organismsDiffer>false</organismsDiffer>
    <experiments>3</experiments>
</comment>
<comment type="interaction">
    <interactant intactId="EBI-10694821">
        <id>Q6P1J6-2</id>
    </interactant>
    <interactant intactId="EBI-372432">
        <id>Q8WW01</id>
        <label>TSEN15</label>
    </interactant>
    <organismsDiffer>false</organismsDiffer>
    <experiments>3</experiments>
</comment>
<comment type="interaction">
    <interactant intactId="EBI-10694821">
        <id>Q6P1J6-2</id>
    </interactant>
    <interactant intactId="EBI-359832">
        <id>P61981</id>
        <label>YWHAG</label>
    </interactant>
    <organismsDiffer>false</organismsDiffer>
    <experiments>3</experiments>
</comment>
<comment type="subcellular location">
    <subcellularLocation>
        <location evidence="1">Apical cell membrane</location>
        <topology evidence="3">Single-pass type I membrane protein</topology>
    </subcellularLocation>
    <text evidence="1">Present in the intestinal brush border membranes.</text>
</comment>
<comment type="alternative products">
    <event type="alternative splicing"/>
    <isoform>
        <id>Q6P1J6-1</id>
        <name>1</name>
        <sequence type="displayed"/>
    </isoform>
    <isoform>
        <id>Q6P1J6-2</id>
        <name>2</name>
        <sequence type="described" ref="VSP_032226 VSP_032231 VSP_032232"/>
    </isoform>
    <isoform>
        <id>Q6P1J6-3</id>
        <name>3</name>
        <sequence type="described" ref="VSP_032227 VSP_032228"/>
    </isoform>
    <isoform>
        <id>Q6P1J6-4</id>
        <name>4</name>
        <sequence type="described" ref="VSP_032229 VSP_032230"/>
    </isoform>
    <isoform>
        <id>Q6P1J6-5</id>
        <name>5</name>
        <sequence type="described" ref="VSP_032225"/>
    </isoform>
</comment>
<comment type="tissue specificity">
    <text evidence="5">Expressed in the epidermis (at protein level).</text>
</comment>
<comment type="domain">
    <text evidence="1">Repeat 2 contains the catalytic domain.</text>
</comment>
<comment type="PTM">
    <text evidence="1">Undergoes proteolytic cleavage in the ileum.</text>
</comment>
<comment type="similarity">
    <text evidence="8">Belongs to the 'GDSL' lipolytic enzyme family. Phospholipase B1 subfamily.</text>
</comment>
<comment type="sequence caution" evidence="8">
    <conflict type="erroneous initiation">
        <sequence resource="EMBL-CDS" id="BAB70920"/>
    </conflict>
    <text>Truncated N-terminus.</text>
</comment>
<reference key="1">
    <citation type="journal article" date="2005" name="Nature">
        <title>Generation and annotation of the DNA sequences of human chromosomes 2 and 4.</title>
        <authorList>
            <person name="Hillier L.W."/>
            <person name="Graves T.A."/>
            <person name="Fulton R.S."/>
            <person name="Fulton L.A."/>
            <person name="Pepin K.H."/>
            <person name="Minx P."/>
            <person name="Wagner-McPherson C."/>
            <person name="Layman D."/>
            <person name="Wylie K."/>
            <person name="Sekhon M."/>
            <person name="Becker M.C."/>
            <person name="Fewell G.A."/>
            <person name="Delehaunty K.D."/>
            <person name="Miner T.L."/>
            <person name="Nash W.E."/>
            <person name="Kremitzki C."/>
            <person name="Oddy L."/>
            <person name="Du H."/>
            <person name="Sun H."/>
            <person name="Bradshaw-Cordum H."/>
            <person name="Ali J."/>
            <person name="Carter J."/>
            <person name="Cordes M."/>
            <person name="Harris A."/>
            <person name="Isak A."/>
            <person name="van Brunt A."/>
            <person name="Nguyen C."/>
            <person name="Du F."/>
            <person name="Courtney L."/>
            <person name="Kalicki J."/>
            <person name="Ozersky P."/>
            <person name="Abbott S."/>
            <person name="Armstrong J."/>
            <person name="Belter E.A."/>
            <person name="Caruso L."/>
            <person name="Cedroni M."/>
            <person name="Cotton M."/>
            <person name="Davidson T."/>
            <person name="Desai A."/>
            <person name="Elliott G."/>
            <person name="Erb T."/>
            <person name="Fronick C."/>
            <person name="Gaige T."/>
            <person name="Haakenson W."/>
            <person name="Haglund K."/>
            <person name="Holmes A."/>
            <person name="Harkins R."/>
            <person name="Kim K."/>
            <person name="Kruchowski S.S."/>
            <person name="Strong C.M."/>
            <person name="Grewal N."/>
            <person name="Goyea E."/>
            <person name="Hou S."/>
            <person name="Levy A."/>
            <person name="Martinka S."/>
            <person name="Mead K."/>
            <person name="McLellan M.D."/>
            <person name="Meyer R."/>
            <person name="Randall-Maher J."/>
            <person name="Tomlinson C."/>
            <person name="Dauphin-Kohlberg S."/>
            <person name="Kozlowicz-Reilly A."/>
            <person name="Shah N."/>
            <person name="Swearengen-Shahid S."/>
            <person name="Snider J."/>
            <person name="Strong J.T."/>
            <person name="Thompson J."/>
            <person name="Yoakum M."/>
            <person name="Leonard S."/>
            <person name="Pearman C."/>
            <person name="Trani L."/>
            <person name="Radionenko M."/>
            <person name="Waligorski J.E."/>
            <person name="Wang C."/>
            <person name="Rock S.M."/>
            <person name="Tin-Wollam A.-M."/>
            <person name="Maupin R."/>
            <person name="Latreille P."/>
            <person name="Wendl M.C."/>
            <person name="Yang S.-P."/>
            <person name="Pohl C."/>
            <person name="Wallis J.W."/>
            <person name="Spieth J."/>
            <person name="Bieri T.A."/>
            <person name="Berkowicz N."/>
            <person name="Nelson J.O."/>
            <person name="Osborne J."/>
            <person name="Ding L."/>
            <person name="Meyer R."/>
            <person name="Sabo A."/>
            <person name="Shotland Y."/>
            <person name="Sinha P."/>
            <person name="Wohldmann P.E."/>
            <person name="Cook L.L."/>
            <person name="Hickenbotham M.T."/>
            <person name="Eldred J."/>
            <person name="Williams D."/>
            <person name="Jones T.A."/>
            <person name="She X."/>
            <person name="Ciccarelli F.D."/>
            <person name="Izaurralde E."/>
            <person name="Taylor J."/>
            <person name="Schmutz J."/>
            <person name="Myers R.M."/>
            <person name="Cox D.R."/>
            <person name="Huang X."/>
            <person name="McPherson J.D."/>
            <person name="Mardis E.R."/>
            <person name="Clifton S.W."/>
            <person name="Warren W.C."/>
            <person name="Chinwalla A.T."/>
            <person name="Eddy S.R."/>
            <person name="Marra M.A."/>
            <person name="Ovcharenko I."/>
            <person name="Furey T.S."/>
            <person name="Miller W."/>
            <person name="Eichler E.E."/>
            <person name="Bork P."/>
            <person name="Suyama M."/>
            <person name="Torrents D."/>
            <person name="Waterston R.H."/>
            <person name="Wilson R.K."/>
        </authorList>
    </citation>
    <scope>NUCLEOTIDE SEQUENCE [LARGE SCALE GENOMIC DNA]</scope>
</reference>
<reference key="2">
    <citation type="submission" date="2005-09" db="EMBL/GenBank/DDBJ databases">
        <authorList>
            <person name="Mural R.J."/>
            <person name="Istrail S."/>
            <person name="Sutton G.G."/>
            <person name="Florea L."/>
            <person name="Halpern A.L."/>
            <person name="Mobarry C.M."/>
            <person name="Lippert R."/>
            <person name="Walenz B."/>
            <person name="Shatkay H."/>
            <person name="Dew I."/>
            <person name="Miller J.R."/>
            <person name="Flanigan M.J."/>
            <person name="Edwards N.J."/>
            <person name="Bolanos R."/>
            <person name="Fasulo D."/>
            <person name="Halldorsson B.V."/>
            <person name="Hannenhalli S."/>
            <person name="Turner R."/>
            <person name="Yooseph S."/>
            <person name="Lu F."/>
            <person name="Nusskern D.R."/>
            <person name="Shue B.C."/>
            <person name="Zheng X.H."/>
            <person name="Zhong F."/>
            <person name="Delcher A.L."/>
            <person name="Huson D.H."/>
            <person name="Kravitz S.A."/>
            <person name="Mouchard L."/>
            <person name="Reinert K."/>
            <person name="Remington K.A."/>
            <person name="Clark A.G."/>
            <person name="Waterman M.S."/>
            <person name="Eichler E.E."/>
            <person name="Adams M.D."/>
            <person name="Hunkapiller M.W."/>
            <person name="Myers E.W."/>
            <person name="Venter J.C."/>
        </authorList>
    </citation>
    <scope>NUCLEOTIDE SEQUENCE [LARGE SCALE GENOMIC DNA]</scope>
</reference>
<reference key="3">
    <citation type="journal article" date="2004" name="Genome Res.">
        <title>The status, quality, and expansion of the NIH full-length cDNA project: the Mammalian Gene Collection (MGC).</title>
        <authorList>
            <consortium name="The MGC Project Team"/>
        </authorList>
    </citation>
    <scope>NUCLEOTIDE SEQUENCE [LARGE SCALE MRNA] (ISOFORMS 2 AND 5)</scope>
    <scope>NUCLEOTIDE SEQUENCE [LARGE SCALE MRNA] OF 3-1458 (ISOFORM 3)</scope>
    <source>
        <tissue>Brain</tissue>
        <tissue>Skin</tissue>
    </source>
</reference>
<reference key="4">
    <citation type="journal article" date="2004" name="Nat. Genet.">
        <title>Complete sequencing and characterization of 21,243 full-length human cDNAs.</title>
        <authorList>
            <person name="Ota T."/>
            <person name="Suzuki Y."/>
            <person name="Nishikawa T."/>
            <person name="Otsuki T."/>
            <person name="Sugiyama T."/>
            <person name="Irie R."/>
            <person name="Wakamatsu A."/>
            <person name="Hayashi K."/>
            <person name="Sato H."/>
            <person name="Nagai K."/>
            <person name="Kimura K."/>
            <person name="Makita H."/>
            <person name="Sekine M."/>
            <person name="Obayashi M."/>
            <person name="Nishi T."/>
            <person name="Shibahara T."/>
            <person name="Tanaka T."/>
            <person name="Ishii S."/>
            <person name="Yamamoto J."/>
            <person name="Saito K."/>
            <person name="Kawai Y."/>
            <person name="Isono Y."/>
            <person name="Nakamura Y."/>
            <person name="Nagahari K."/>
            <person name="Murakami K."/>
            <person name="Yasuda T."/>
            <person name="Iwayanagi T."/>
            <person name="Wagatsuma M."/>
            <person name="Shiratori A."/>
            <person name="Sudo H."/>
            <person name="Hosoiri T."/>
            <person name="Kaku Y."/>
            <person name="Kodaira H."/>
            <person name="Kondo H."/>
            <person name="Sugawara M."/>
            <person name="Takahashi M."/>
            <person name="Kanda K."/>
            <person name="Yokoi T."/>
            <person name="Furuya T."/>
            <person name="Kikkawa E."/>
            <person name="Omura Y."/>
            <person name="Abe K."/>
            <person name="Kamihara K."/>
            <person name="Katsuta N."/>
            <person name="Sato K."/>
            <person name="Tanikawa M."/>
            <person name="Yamazaki M."/>
            <person name="Ninomiya K."/>
            <person name="Ishibashi T."/>
            <person name="Yamashita H."/>
            <person name="Murakawa K."/>
            <person name="Fujimori K."/>
            <person name="Tanai H."/>
            <person name="Kimata M."/>
            <person name="Watanabe M."/>
            <person name="Hiraoka S."/>
            <person name="Chiba Y."/>
            <person name="Ishida S."/>
            <person name="Ono Y."/>
            <person name="Takiguchi S."/>
            <person name="Watanabe S."/>
            <person name="Yosida M."/>
            <person name="Hotuta T."/>
            <person name="Kusano J."/>
            <person name="Kanehori K."/>
            <person name="Takahashi-Fujii A."/>
            <person name="Hara H."/>
            <person name="Tanase T.-O."/>
            <person name="Nomura Y."/>
            <person name="Togiya S."/>
            <person name="Komai F."/>
            <person name="Hara R."/>
            <person name="Takeuchi K."/>
            <person name="Arita M."/>
            <person name="Imose N."/>
            <person name="Musashino K."/>
            <person name="Yuuki H."/>
            <person name="Oshima A."/>
            <person name="Sasaki N."/>
            <person name="Aotsuka S."/>
            <person name="Yoshikawa Y."/>
            <person name="Matsunawa H."/>
            <person name="Ichihara T."/>
            <person name="Shiohata N."/>
            <person name="Sano S."/>
            <person name="Moriya S."/>
            <person name="Momiyama H."/>
            <person name="Satoh N."/>
            <person name="Takami S."/>
            <person name="Terashima Y."/>
            <person name="Suzuki O."/>
            <person name="Nakagawa S."/>
            <person name="Senoh A."/>
            <person name="Mizoguchi H."/>
            <person name="Goto Y."/>
            <person name="Shimizu F."/>
            <person name="Wakebe H."/>
            <person name="Hishigaki H."/>
            <person name="Watanabe T."/>
            <person name="Sugiyama A."/>
            <person name="Takemoto M."/>
            <person name="Kawakami B."/>
            <person name="Yamazaki M."/>
            <person name="Watanabe K."/>
            <person name="Kumagai A."/>
            <person name="Itakura S."/>
            <person name="Fukuzumi Y."/>
            <person name="Fujimori Y."/>
            <person name="Komiyama M."/>
            <person name="Tashiro H."/>
            <person name="Tanigami A."/>
            <person name="Fujiwara T."/>
            <person name="Ono T."/>
            <person name="Yamada K."/>
            <person name="Fujii Y."/>
            <person name="Ozaki K."/>
            <person name="Hirao M."/>
            <person name="Ohmori Y."/>
            <person name="Kawabata A."/>
            <person name="Hikiji T."/>
            <person name="Kobatake N."/>
            <person name="Inagaki H."/>
            <person name="Ikema Y."/>
            <person name="Okamoto S."/>
            <person name="Okitani R."/>
            <person name="Kawakami T."/>
            <person name="Noguchi S."/>
            <person name="Itoh T."/>
            <person name="Shigeta K."/>
            <person name="Senba T."/>
            <person name="Matsumura K."/>
            <person name="Nakajima Y."/>
            <person name="Mizuno T."/>
            <person name="Morinaga M."/>
            <person name="Sasaki M."/>
            <person name="Togashi T."/>
            <person name="Oyama M."/>
            <person name="Hata H."/>
            <person name="Watanabe M."/>
            <person name="Komatsu T."/>
            <person name="Mizushima-Sugano J."/>
            <person name="Satoh T."/>
            <person name="Shirai Y."/>
            <person name="Takahashi Y."/>
            <person name="Nakagawa K."/>
            <person name="Okumura K."/>
            <person name="Nagase T."/>
            <person name="Nomura N."/>
            <person name="Kikuchi H."/>
            <person name="Masuho Y."/>
            <person name="Yamashita R."/>
            <person name="Nakai K."/>
            <person name="Yada T."/>
            <person name="Nakamura Y."/>
            <person name="Ohara O."/>
            <person name="Isogai T."/>
            <person name="Sugano S."/>
        </authorList>
    </citation>
    <scope>NUCLEOTIDE SEQUENCE [LARGE SCALE MRNA] OF 426-1458 (ISOFORM 4)</scope>
    <source>
        <tissue>Brain</tissue>
    </source>
</reference>
<reference key="5">
    <citation type="journal article" date="2002" name="Biochem. Biophys. Res. Commun.">
        <title>Human epidermis is a novel site of phospholipase B expression.</title>
        <authorList>
            <person name="Maury E."/>
            <person name="Prevost M.-C."/>
            <person name="Nauze M."/>
            <person name="Redoules D."/>
            <person name="Tarroux R."/>
            <person name="Charveron M."/>
            <person name="Salles J.-P."/>
            <person name="Perret B."/>
            <person name="Chap H."/>
            <person name="Gassama-Diagne A."/>
        </authorList>
    </citation>
    <scope>TISSUE SPECIFICITY</scope>
</reference>
<name>PLB1_HUMAN</name>